<evidence type="ECO:0000255" key="1"/>
<evidence type="ECO:0000269" key="2">
    <source>
    </source>
</evidence>
<evidence type="ECO:0000303" key="3">
    <source>
    </source>
</evidence>
<evidence type="ECO:0000305" key="4"/>
<sequence>GSSGLISMPRV</sequence>
<comment type="function">
    <text evidence="4">Mediates visceral muscle contractile activity (myotropic activity).</text>
</comment>
<comment type="subcellular location">
    <subcellularLocation>
        <location evidence="4">Secreted</location>
    </subcellularLocation>
</comment>
<comment type="similarity">
    <text evidence="1">Belongs to the periviscerokinin family.</text>
</comment>
<accession>P85600</accession>
<protein>
    <recommendedName>
        <fullName evidence="3">Periviscerokinin-2</fullName>
        <shortName evidence="3">DipPu-PVK-2</shortName>
    </recommendedName>
</protein>
<proteinExistence type="evidence at protein level"/>
<reference evidence="4" key="1">
    <citation type="journal article" date="2009" name="BMC Evol. Biol.">
        <title>A proteomic approach for studying insect phylogeny: CAPA peptides of ancient insect taxa (Dictyoptera, Blattoptera) as a test case.</title>
        <authorList>
            <person name="Roth S."/>
            <person name="Fromm B."/>
            <person name="Gaede G."/>
            <person name="Predel R."/>
        </authorList>
    </citation>
    <scope>PROTEIN SEQUENCE</scope>
    <scope>AMIDATION AT VAL-11</scope>
    <source>
        <tissue evidence="2">Abdominal perisympathetic organs</tissue>
    </source>
</reference>
<feature type="peptide" id="PRO_0000378784" description="Periviscerokinin-2" evidence="2">
    <location>
        <begin position="1"/>
        <end position="11"/>
    </location>
</feature>
<feature type="modified residue" description="Valine amide" evidence="2">
    <location>
        <position position="11"/>
    </location>
</feature>
<dbReference type="GO" id="GO:0005576">
    <property type="term" value="C:extracellular region"/>
    <property type="evidence" value="ECO:0007669"/>
    <property type="project" value="UniProtKB-SubCell"/>
</dbReference>
<dbReference type="GO" id="GO:0007218">
    <property type="term" value="P:neuropeptide signaling pathway"/>
    <property type="evidence" value="ECO:0007669"/>
    <property type="project" value="UniProtKB-KW"/>
</dbReference>
<dbReference type="InterPro" id="IPR013231">
    <property type="entry name" value="Periviscerokinin"/>
</dbReference>
<dbReference type="Pfam" id="PF08259">
    <property type="entry name" value="Periviscerokin"/>
    <property type="match status" value="1"/>
</dbReference>
<organism>
    <name type="scientific">Diploptera punctata</name>
    <name type="common">Pacific beetle cockroach</name>
    <dbReference type="NCBI Taxonomy" id="6984"/>
    <lineage>
        <taxon>Eukaryota</taxon>
        <taxon>Metazoa</taxon>
        <taxon>Ecdysozoa</taxon>
        <taxon>Arthropoda</taxon>
        <taxon>Hexapoda</taxon>
        <taxon>Insecta</taxon>
        <taxon>Pterygota</taxon>
        <taxon>Neoptera</taxon>
        <taxon>Polyneoptera</taxon>
        <taxon>Dictyoptera</taxon>
        <taxon>Blattodea</taxon>
        <taxon>Blaberoidea</taxon>
        <taxon>Blaberidae</taxon>
        <taxon>Diplopterinae</taxon>
        <taxon>Diploptera</taxon>
    </lineage>
</organism>
<keyword id="KW-0027">Amidation</keyword>
<keyword id="KW-0903">Direct protein sequencing</keyword>
<keyword id="KW-0527">Neuropeptide</keyword>
<keyword id="KW-0964">Secreted</keyword>
<name>PVK2_DIPPU</name>